<proteinExistence type="inferred from homology"/>
<protein>
    <recommendedName>
        <fullName evidence="1">Nitrogenase-stabilizing/protective protein NifW</fullName>
    </recommendedName>
</protein>
<name>NIFW_GLOC7</name>
<keyword id="KW-0535">Nitrogen fixation</keyword>
<keyword id="KW-1185">Reference proteome</keyword>
<comment type="function">
    <text evidence="1">May protect the nitrogenase Fe-Mo protein from oxidative damage.</text>
</comment>
<comment type="subunit">
    <text evidence="1">Homotrimer; associates with NifD.</text>
</comment>
<comment type="similarity">
    <text evidence="1">Belongs to the NifW family.</text>
</comment>
<accession>B7KG67</accession>
<dbReference type="EMBL" id="CP001291">
    <property type="protein sequence ID" value="ACK70538.1"/>
    <property type="molecule type" value="Genomic_DNA"/>
</dbReference>
<dbReference type="RefSeq" id="WP_015954144.1">
    <property type="nucleotide sequence ID" value="NC_011729.1"/>
</dbReference>
<dbReference type="SMR" id="B7KG67"/>
<dbReference type="STRING" id="65393.PCC7424_2111"/>
<dbReference type="KEGG" id="cyc:PCC7424_2111"/>
<dbReference type="eggNOG" id="ENOG50330W8">
    <property type="taxonomic scope" value="Bacteria"/>
</dbReference>
<dbReference type="HOGENOM" id="CLU_145318_1_0_3"/>
<dbReference type="OrthoDB" id="9811868at2"/>
<dbReference type="Proteomes" id="UP000002384">
    <property type="component" value="Chromosome"/>
</dbReference>
<dbReference type="GO" id="GO:0009399">
    <property type="term" value="P:nitrogen fixation"/>
    <property type="evidence" value="ECO:0007669"/>
    <property type="project" value="UniProtKB-UniRule"/>
</dbReference>
<dbReference type="HAMAP" id="MF_00529">
    <property type="entry name" value="NifW"/>
    <property type="match status" value="1"/>
</dbReference>
<dbReference type="InterPro" id="IPR004893">
    <property type="entry name" value="NifW"/>
</dbReference>
<dbReference type="NCBIfam" id="NF010702">
    <property type="entry name" value="PRK14102.1"/>
    <property type="match status" value="1"/>
</dbReference>
<dbReference type="Pfam" id="PF03206">
    <property type="entry name" value="NifW"/>
    <property type="match status" value="1"/>
</dbReference>
<dbReference type="PIRSF" id="PIRSF005790">
    <property type="entry name" value="NifW"/>
    <property type="match status" value="1"/>
</dbReference>
<evidence type="ECO:0000255" key="1">
    <source>
        <dbReference type="HAMAP-Rule" id="MF_00529"/>
    </source>
</evidence>
<reference key="1">
    <citation type="journal article" date="2011" name="MBio">
        <title>Novel metabolic attributes of the genus Cyanothece, comprising a group of unicellular nitrogen-fixing Cyanobacteria.</title>
        <authorList>
            <person name="Bandyopadhyay A."/>
            <person name="Elvitigala T."/>
            <person name="Welsh E."/>
            <person name="Stockel J."/>
            <person name="Liberton M."/>
            <person name="Min H."/>
            <person name="Sherman L.A."/>
            <person name="Pakrasi H.B."/>
        </authorList>
    </citation>
    <scope>NUCLEOTIDE SEQUENCE [LARGE SCALE GENOMIC DNA]</scope>
    <source>
        <strain>PCC 7424</strain>
    </source>
</reference>
<organism>
    <name type="scientific">Gloeothece citriformis (strain PCC 7424)</name>
    <name type="common">Cyanothece sp. (strain PCC 7424)</name>
    <dbReference type="NCBI Taxonomy" id="65393"/>
    <lineage>
        <taxon>Bacteria</taxon>
        <taxon>Bacillati</taxon>
        <taxon>Cyanobacteriota</taxon>
        <taxon>Cyanophyceae</taxon>
        <taxon>Oscillatoriophycideae</taxon>
        <taxon>Chroococcales</taxon>
        <taxon>Aphanothecaceae</taxon>
        <taxon>Gloeothece</taxon>
        <taxon>Gloeothece citriformis</taxon>
    </lineage>
</organism>
<feature type="chain" id="PRO_1000127807" description="Nitrogenase-stabilizing/protective protein NifW">
    <location>
        <begin position="1"/>
        <end position="107"/>
    </location>
</feature>
<sequence length="107" mass="12480">MMTTAKTFAEFKTLTDTEDYLQFFGIAYDQGFVNVNRLHILKQFSKLIEEVDAAFPTLSETEKLEKYGQAFEEAYELFKTSSPLETKLFKVFQEKPKDVVFLKDLTK</sequence>
<gene>
    <name evidence="1" type="primary">nifW</name>
    <name type="ordered locus">PCC7424_2111</name>
</gene>